<gene>
    <name evidence="1" type="primary">rpmB</name>
    <name type="ordered locus">Dvul_1846</name>
</gene>
<accession>A1VEJ7</accession>
<protein>
    <recommendedName>
        <fullName evidence="1">Large ribosomal subunit protein bL28</fullName>
    </recommendedName>
    <alternativeName>
        <fullName evidence="2">50S ribosomal protein L28</fullName>
    </alternativeName>
</protein>
<organism>
    <name type="scientific">Nitratidesulfovibrio vulgaris (strain DP4)</name>
    <name type="common">Desulfovibrio vulgaris</name>
    <dbReference type="NCBI Taxonomy" id="391774"/>
    <lineage>
        <taxon>Bacteria</taxon>
        <taxon>Pseudomonadati</taxon>
        <taxon>Thermodesulfobacteriota</taxon>
        <taxon>Desulfovibrionia</taxon>
        <taxon>Desulfovibrionales</taxon>
        <taxon>Desulfovibrionaceae</taxon>
        <taxon>Nitratidesulfovibrio</taxon>
    </lineage>
</organism>
<evidence type="ECO:0000255" key="1">
    <source>
        <dbReference type="HAMAP-Rule" id="MF_00373"/>
    </source>
</evidence>
<evidence type="ECO:0000305" key="2"/>
<reference key="1">
    <citation type="journal article" date="2009" name="Environ. Microbiol.">
        <title>Contribution of mobile genetic elements to Desulfovibrio vulgaris genome plasticity.</title>
        <authorList>
            <person name="Walker C.B."/>
            <person name="Stolyar S."/>
            <person name="Chivian D."/>
            <person name="Pinel N."/>
            <person name="Gabster J.A."/>
            <person name="Dehal P.S."/>
            <person name="He Z."/>
            <person name="Yang Z.K."/>
            <person name="Yen H.C."/>
            <person name="Zhou J."/>
            <person name="Wall J.D."/>
            <person name="Hazen T.C."/>
            <person name="Arkin A.P."/>
            <person name="Stahl D.A."/>
        </authorList>
    </citation>
    <scope>NUCLEOTIDE SEQUENCE [LARGE SCALE GENOMIC DNA]</scope>
    <source>
        <strain>DP4</strain>
    </source>
</reference>
<dbReference type="EMBL" id="CP000527">
    <property type="protein sequence ID" value="ABM28863.1"/>
    <property type="molecule type" value="Genomic_DNA"/>
</dbReference>
<dbReference type="RefSeq" id="WP_010938507.1">
    <property type="nucleotide sequence ID" value="NC_008751.1"/>
</dbReference>
<dbReference type="SMR" id="A1VEJ7"/>
<dbReference type="KEGG" id="dvl:Dvul_1846"/>
<dbReference type="HOGENOM" id="CLU_064548_7_0_7"/>
<dbReference type="Proteomes" id="UP000009173">
    <property type="component" value="Chromosome"/>
</dbReference>
<dbReference type="GO" id="GO:1990904">
    <property type="term" value="C:ribonucleoprotein complex"/>
    <property type="evidence" value="ECO:0007669"/>
    <property type="project" value="UniProtKB-KW"/>
</dbReference>
<dbReference type="GO" id="GO:0005840">
    <property type="term" value="C:ribosome"/>
    <property type="evidence" value="ECO:0007669"/>
    <property type="project" value="UniProtKB-KW"/>
</dbReference>
<dbReference type="GO" id="GO:0003735">
    <property type="term" value="F:structural constituent of ribosome"/>
    <property type="evidence" value="ECO:0007669"/>
    <property type="project" value="InterPro"/>
</dbReference>
<dbReference type="GO" id="GO:0006412">
    <property type="term" value="P:translation"/>
    <property type="evidence" value="ECO:0007669"/>
    <property type="project" value="UniProtKB-UniRule"/>
</dbReference>
<dbReference type="Gene3D" id="2.30.170.40">
    <property type="entry name" value="Ribosomal protein L28/L24"/>
    <property type="match status" value="1"/>
</dbReference>
<dbReference type="HAMAP" id="MF_00373">
    <property type="entry name" value="Ribosomal_bL28"/>
    <property type="match status" value="1"/>
</dbReference>
<dbReference type="InterPro" id="IPR050096">
    <property type="entry name" value="Bacterial_rp_bL28"/>
</dbReference>
<dbReference type="InterPro" id="IPR026569">
    <property type="entry name" value="Ribosomal_bL28"/>
</dbReference>
<dbReference type="InterPro" id="IPR034704">
    <property type="entry name" value="Ribosomal_bL28/bL31-like_sf"/>
</dbReference>
<dbReference type="InterPro" id="IPR001383">
    <property type="entry name" value="Ribosomal_bL28_bact-type"/>
</dbReference>
<dbReference type="InterPro" id="IPR037147">
    <property type="entry name" value="Ribosomal_bL28_sf"/>
</dbReference>
<dbReference type="NCBIfam" id="TIGR00009">
    <property type="entry name" value="L28"/>
    <property type="match status" value="1"/>
</dbReference>
<dbReference type="PANTHER" id="PTHR39080">
    <property type="entry name" value="50S RIBOSOMAL PROTEIN L28"/>
    <property type="match status" value="1"/>
</dbReference>
<dbReference type="PANTHER" id="PTHR39080:SF1">
    <property type="entry name" value="LARGE RIBOSOMAL SUBUNIT PROTEIN BL28A"/>
    <property type="match status" value="1"/>
</dbReference>
<dbReference type="Pfam" id="PF00830">
    <property type="entry name" value="Ribosomal_L28"/>
    <property type="match status" value="1"/>
</dbReference>
<dbReference type="SUPFAM" id="SSF143800">
    <property type="entry name" value="L28p-like"/>
    <property type="match status" value="1"/>
</dbReference>
<sequence>MGKQCEVCGKKPQVGHHVSHSNIKTKRRFEPNLQSVRHQLPSGEVKTVTVCTRCLRSGAVTKPVVRKSA</sequence>
<comment type="similarity">
    <text evidence="1">Belongs to the bacterial ribosomal protein bL28 family.</text>
</comment>
<keyword id="KW-0687">Ribonucleoprotein</keyword>
<keyword id="KW-0689">Ribosomal protein</keyword>
<feature type="chain" id="PRO_1000007226" description="Large ribosomal subunit protein bL28">
    <location>
        <begin position="1"/>
        <end position="69"/>
    </location>
</feature>
<proteinExistence type="inferred from homology"/>
<name>RL28_NITV4</name>